<reference key="1">
    <citation type="journal article" date="2015" name="Proc. Natl. Acad. Sci. U.S.A.">
        <title>Trichodesmium genome maintains abundant, widespread noncoding DNA in situ, despite oligotrophic lifestyle.</title>
        <authorList>
            <person name="Walworth N."/>
            <person name="Pfreundt U."/>
            <person name="Nelson W.C."/>
            <person name="Mincer T."/>
            <person name="Heidelberg J.F."/>
            <person name="Fu F."/>
            <person name="Waterbury J.B."/>
            <person name="Glavina del Rio T."/>
            <person name="Goodwin L."/>
            <person name="Kyrpides N.C."/>
            <person name="Land M.L."/>
            <person name="Woyke T."/>
            <person name="Hutchins D.A."/>
            <person name="Hess W.R."/>
            <person name="Webb E.A."/>
        </authorList>
    </citation>
    <scope>NUCLEOTIDE SEQUENCE [LARGE SCALE GENOMIC DNA]</scope>
    <source>
        <strain>IMS101</strain>
    </source>
</reference>
<comment type="function">
    <text evidence="1">A core subunit of photosystem II (PSII), probably helps stabilize the reaction center.</text>
</comment>
<comment type="subunit">
    <text evidence="1">PSII is composed of 1 copy each of membrane proteins PsbA, PsbB, PsbC, PsbD, PsbE, PsbF, PsbH, PsbI, PsbJ, PsbK, PsbL, PsbM, PsbT, PsbX, PsbY, PsbZ, Psb30/Ycf12, peripheral proteins PsbO, CyanoQ (PsbQ), PsbU, PsbV and a large number of cofactors. It forms dimeric complexes.</text>
</comment>
<comment type="subcellular location">
    <subcellularLocation>
        <location evidence="1">Cellular thylakoid membrane</location>
        <topology evidence="1">Single-pass membrane protein</topology>
    </subcellularLocation>
</comment>
<comment type="similarity">
    <text evidence="1">Belongs to the Psb30/Ycf12 family.</text>
</comment>
<evidence type="ECO:0000255" key="1">
    <source>
        <dbReference type="HAMAP-Rule" id="MF_01329"/>
    </source>
</evidence>
<feature type="chain" id="PRO_0000342348" description="Photosystem II reaction center protein Psb30">
    <location>
        <begin position="1"/>
        <end position="43"/>
    </location>
</feature>
<feature type="transmembrane region" description="Helical" evidence="1">
    <location>
        <begin position="16"/>
        <end position="36"/>
    </location>
</feature>
<organism>
    <name type="scientific">Trichodesmium erythraeum (strain IMS101)</name>
    <dbReference type="NCBI Taxonomy" id="203124"/>
    <lineage>
        <taxon>Bacteria</taxon>
        <taxon>Bacillati</taxon>
        <taxon>Cyanobacteriota</taxon>
        <taxon>Cyanophyceae</taxon>
        <taxon>Oscillatoriophycideae</taxon>
        <taxon>Oscillatoriales</taxon>
        <taxon>Microcoleaceae</taxon>
        <taxon>Trichodesmium</taxon>
    </lineage>
</organism>
<sequence>MGFLTDFFSNINFETIAQLTMLAMVLIAGPVVIVLLALQGGDL</sequence>
<protein>
    <recommendedName>
        <fullName evidence="1">Photosystem II reaction center protein Psb30</fullName>
    </recommendedName>
    <alternativeName>
        <fullName evidence="1">Photosystem II reaction center protein Ycf12</fullName>
    </alternativeName>
</protein>
<proteinExistence type="inferred from homology"/>
<name>PSB30_TRIEI</name>
<dbReference type="EMBL" id="CP000393">
    <property type="protein sequence ID" value="ABG51528.1"/>
    <property type="molecule type" value="Genomic_DNA"/>
</dbReference>
<dbReference type="RefSeq" id="WP_011611895.1">
    <property type="nucleotide sequence ID" value="NC_008312.1"/>
</dbReference>
<dbReference type="SMR" id="Q112P6"/>
<dbReference type="STRING" id="203124.Tery_2304"/>
<dbReference type="KEGG" id="ter:Tery_2304"/>
<dbReference type="eggNOG" id="ENOG5033A5B">
    <property type="taxonomic scope" value="Bacteria"/>
</dbReference>
<dbReference type="HOGENOM" id="CLU_196761_0_1_3"/>
<dbReference type="OrthoDB" id="516821at2"/>
<dbReference type="GO" id="GO:0009523">
    <property type="term" value="C:photosystem II"/>
    <property type="evidence" value="ECO:0007669"/>
    <property type="project" value="UniProtKB-KW"/>
</dbReference>
<dbReference type="GO" id="GO:0031676">
    <property type="term" value="C:plasma membrane-derived thylakoid membrane"/>
    <property type="evidence" value="ECO:0007669"/>
    <property type="project" value="UniProtKB-SubCell"/>
</dbReference>
<dbReference type="GO" id="GO:0015979">
    <property type="term" value="P:photosynthesis"/>
    <property type="evidence" value="ECO:0007669"/>
    <property type="project" value="UniProtKB-KW"/>
</dbReference>
<dbReference type="HAMAP" id="MF_01329">
    <property type="entry name" value="PSII_Psb30_Ycf12"/>
    <property type="match status" value="1"/>
</dbReference>
<dbReference type="InterPro" id="IPR010284">
    <property type="entry name" value="PSII_Ycf12_core-subunit"/>
</dbReference>
<dbReference type="NCBIfam" id="NF010239">
    <property type="entry name" value="PRK13686.1"/>
    <property type="match status" value="1"/>
</dbReference>
<dbReference type="Pfam" id="PF05969">
    <property type="entry name" value="PSII_Ycf12"/>
    <property type="match status" value="1"/>
</dbReference>
<gene>
    <name evidence="1" type="primary">psb30</name>
    <name evidence="1" type="synonym">ycf12</name>
    <name type="ordered locus">Tery_2304</name>
</gene>
<accession>Q112P6</accession>
<keyword id="KW-0472">Membrane</keyword>
<keyword id="KW-0602">Photosynthesis</keyword>
<keyword id="KW-0604">Photosystem II</keyword>
<keyword id="KW-0793">Thylakoid</keyword>
<keyword id="KW-0812">Transmembrane</keyword>
<keyword id="KW-1133">Transmembrane helix</keyword>